<proteinExistence type="inferred from homology"/>
<keyword id="KW-0046">Antibiotic resistance</keyword>
<keyword id="KW-0997">Cell inner membrane</keyword>
<keyword id="KW-1003">Cell membrane</keyword>
<keyword id="KW-0472">Membrane</keyword>
<keyword id="KW-0812">Transmembrane</keyword>
<keyword id="KW-1133">Transmembrane helix</keyword>
<keyword id="KW-0813">Transport</keyword>
<gene>
    <name type="primary">mdfA</name>
    <name type="ordered locus">YPD8_3569</name>
</gene>
<protein>
    <recommendedName>
        <fullName>Multidrug transporter MdfA</fullName>
    </recommendedName>
</protein>
<name>MDFA_YERP1</name>
<comment type="function">
    <text evidence="1">Efflux pump driven by the proton motive force. Confers resistance to a broad spectrum of chemically unrelated drugs (By similarity).</text>
</comment>
<comment type="subunit">
    <text evidence="1">Monomer.</text>
</comment>
<comment type="subcellular location">
    <subcellularLocation>
        <location evidence="1">Cell inner membrane</location>
        <topology evidence="1">Multi-pass membrane protein</topology>
    </subcellularLocation>
</comment>
<comment type="similarity">
    <text evidence="3">Belongs to the major facilitator superfamily. MdfA family.</text>
</comment>
<comment type="sequence caution" evidence="3">
    <conflict type="erroneous initiation">
        <sequence resource="EMBL-CDS" id="ACY64237"/>
    </conflict>
    <text>Truncated N-terminus.</text>
</comment>
<organism>
    <name type="scientific">Yersinia pestis (strain D182038)</name>
    <dbReference type="NCBI Taxonomy" id="637385"/>
    <lineage>
        <taxon>Bacteria</taxon>
        <taxon>Pseudomonadati</taxon>
        <taxon>Pseudomonadota</taxon>
        <taxon>Gammaproteobacteria</taxon>
        <taxon>Enterobacterales</taxon>
        <taxon>Yersiniaceae</taxon>
        <taxon>Yersinia</taxon>
    </lineage>
</organism>
<reference key="1">
    <citation type="journal article" date="2009" name="Am. J. Trop. Med. Hyg.">
        <title>Spatial variation of Yersinia pestis from Yunnan Province of China.</title>
        <authorList>
            <person name="Zhang Z."/>
            <person name="Hai R."/>
            <person name="Song Z."/>
            <person name="Xia L."/>
            <person name="Liang Y."/>
            <person name="Cai H."/>
            <person name="Liang Y."/>
            <person name="Shen X."/>
            <person name="Zhang E."/>
            <person name="Xu J."/>
            <person name="Yu D."/>
            <person name="Yu X.J."/>
        </authorList>
    </citation>
    <scope>NUCLEOTIDE SEQUENCE [LARGE SCALE GENOMIC DNA]</scope>
    <source>
        <strain>D182038</strain>
    </source>
</reference>
<evidence type="ECO:0000250" key="1"/>
<evidence type="ECO:0000255" key="2"/>
<evidence type="ECO:0000305" key="3"/>
<sequence>MQTSFSPATRLGRRALLFPLCLVLFEFAAYIANDMIQPGMLAVVAEFNASVEWVPTSMTAYLAGGMFLQWLLGPLSDRRGRRPVMLAGVAFFVVTCLAILLVNSIEQFIAMRFLQGIGLCFIGAVGYATIQESFEEAVCIKITALMANVALIAPLLGPLAGAALIHVAPWQTMFVLFAVLGAISFAGLWRAMPETASLKGEKLSVANMWRDYKQVLANRRFLCGSLALGFASLPLLAWIAQSPVILISGEQLSTFEYGILQVPIFGALIIGNLTLARLSGKTSIPQLIRYGAGPMIVGLMIAAGSTLYSSHAYLWMTAGLSLYAFGIGLANAGLVRLTLFASDISKGTVSAAMGMISMMIFTLGIELAKVAYLWGDSRGFNLFNLMSGLLWLGLVMVFIRRQPEAVATE</sequence>
<feature type="chain" id="PRO_0000405340" description="Multidrug transporter MdfA">
    <location>
        <begin position="1"/>
        <end position="409"/>
    </location>
</feature>
<feature type="topological domain" description="Cytoplasmic" evidence="2">
    <location>
        <begin position="1"/>
        <end position="15"/>
    </location>
</feature>
<feature type="transmembrane region" description="Helical" evidence="2">
    <location>
        <begin position="16"/>
        <end position="36"/>
    </location>
</feature>
<feature type="topological domain" description="Periplasmic" evidence="2">
    <location>
        <begin position="37"/>
        <end position="52"/>
    </location>
</feature>
<feature type="transmembrane region" description="Helical" evidence="2">
    <location>
        <begin position="53"/>
        <end position="73"/>
    </location>
</feature>
<feature type="topological domain" description="Cytoplasmic" evidence="2">
    <location>
        <begin position="74"/>
        <end position="82"/>
    </location>
</feature>
<feature type="transmembrane region" description="Helical" evidence="2">
    <location>
        <begin position="83"/>
        <end position="103"/>
    </location>
</feature>
<feature type="topological domain" description="Periplasmic" evidence="2">
    <location>
        <begin position="104"/>
        <end position="107"/>
    </location>
</feature>
<feature type="transmembrane region" description="Helical" evidence="2">
    <location>
        <begin position="108"/>
        <end position="128"/>
    </location>
</feature>
<feature type="topological domain" description="Cytoplasmic" evidence="2">
    <location>
        <begin position="129"/>
        <end position="144"/>
    </location>
</feature>
<feature type="transmembrane region" description="Helical" evidence="2">
    <location>
        <begin position="145"/>
        <end position="165"/>
    </location>
</feature>
<feature type="topological domain" description="Periplasmic" evidence="2">
    <location>
        <begin position="166"/>
        <end position="168"/>
    </location>
</feature>
<feature type="transmembrane region" description="Helical" evidence="2">
    <location>
        <begin position="169"/>
        <end position="189"/>
    </location>
</feature>
<feature type="topological domain" description="Cytoplasmic" evidence="2">
    <location>
        <begin position="190"/>
        <end position="226"/>
    </location>
</feature>
<feature type="transmembrane region" description="Helical" evidence="2">
    <location>
        <begin position="227"/>
        <end position="247"/>
    </location>
</feature>
<feature type="topological domain" description="Periplasmic" evidence="2">
    <location>
        <begin position="248"/>
        <end position="254"/>
    </location>
</feature>
<feature type="transmembrane region" description="Helical" evidence="2">
    <location>
        <begin position="255"/>
        <end position="275"/>
    </location>
</feature>
<feature type="topological domain" description="Cytoplasmic" evidence="2">
    <location>
        <begin position="276"/>
        <end position="286"/>
    </location>
</feature>
<feature type="transmembrane region" description="Helical" evidence="2">
    <location>
        <begin position="287"/>
        <end position="307"/>
    </location>
</feature>
<feature type="topological domain" description="Periplasmic" evidence="2">
    <location>
        <begin position="308"/>
        <end position="314"/>
    </location>
</feature>
<feature type="transmembrane region" description="Helical" evidence="2">
    <location>
        <begin position="315"/>
        <end position="335"/>
    </location>
</feature>
<feature type="topological domain" description="Cytoplasmic" evidence="2">
    <location>
        <begin position="336"/>
        <end position="347"/>
    </location>
</feature>
<feature type="transmembrane region" description="Helical" evidence="2">
    <location>
        <begin position="348"/>
        <end position="368"/>
    </location>
</feature>
<feature type="topological domain" description="Periplasmic" evidence="2">
    <location>
        <begin position="369"/>
        <end position="378"/>
    </location>
</feature>
<feature type="transmembrane region" description="Helical" evidence="2">
    <location>
        <begin position="379"/>
        <end position="399"/>
    </location>
</feature>
<feature type="topological domain" description="Cytoplasmic" evidence="2">
    <location>
        <begin position="400"/>
        <end position="409"/>
    </location>
</feature>
<dbReference type="EMBL" id="CP001589">
    <property type="protein sequence ID" value="ACY64237.1"/>
    <property type="status" value="ALT_INIT"/>
    <property type="molecule type" value="Genomic_DNA"/>
</dbReference>
<dbReference type="RefSeq" id="WP_002215753.1">
    <property type="nucleotide sequence ID" value="NC_017160.1"/>
</dbReference>
<dbReference type="SMR" id="D0JUX5"/>
<dbReference type="KEGG" id="ypx:YPD8_3569"/>
<dbReference type="PATRIC" id="fig|637385.3.peg.4736"/>
<dbReference type="HOGENOM" id="CLU_001265_47_2_6"/>
<dbReference type="GO" id="GO:0005886">
    <property type="term" value="C:plasma membrane"/>
    <property type="evidence" value="ECO:0007669"/>
    <property type="project" value="UniProtKB-SubCell"/>
</dbReference>
<dbReference type="GO" id="GO:0015385">
    <property type="term" value="F:sodium:proton antiporter activity"/>
    <property type="evidence" value="ECO:0007669"/>
    <property type="project" value="TreeGrafter"/>
</dbReference>
<dbReference type="GO" id="GO:0046677">
    <property type="term" value="P:response to antibiotic"/>
    <property type="evidence" value="ECO:0007669"/>
    <property type="project" value="UniProtKB-KW"/>
</dbReference>
<dbReference type="GO" id="GO:1990961">
    <property type="term" value="P:xenobiotic detoxification by transmembrane export across the plasma membrane"/>
    <property type="evidence" value="ECO:0007669"/>
    <property type="project" value="TreeGrafter"/>
</dbReference>
<dbReference type="CDD" id="cd17320">
    <property type="entry name" value="MFS_MdfA_MDR_like"/>
    <property type="match status" value="1"/>
</dbReference>
<dbReference type="Gene3D" id="1.20.1720.10">
    <property type="entry name" value="Multidrug resistance protein D"/>
    <property type="match status" value="1"/>
</dbReference>
<dbReference type="InterPro" id="IPR011701">
    <property type="entry name" value="MFS"/>
</dbReference>
<dbReference type="InterPro" id="IPR020846">
    <property type="entry name" value="MFS_dom"/>
</dbReference>
<dbReference type="InterPro" id="IPR036259">
    <property type="entry name" value="MFS_trans_sf"/>
</dbReference>
<dbReference type="NCBIfam" id="NF011931">
    <property type="entry name" value="PRK15402.1"/>
    <property type="match status" value="1"/>
</dbReference>
<dbReference type="PANTHER" id="PTHR23502">
    <property type="entry name" value="MAJOR FACILITATOR SUPERFAMILY"/>
    <property type="match status" value="1"/>
</dbReference>
<dbReference type="PANTHER" id="PTHR23502:SF43">
    <property type="entry name" value="MULTIDRUG TRANSPORTER MDFA"/>
    <property type="match status" value="1"/>
</dbReference>
<dbReference type="Pfam" id="PF07690">
    <property type="entry name" value="MFS_1"/>
    <property type="match status" value="1"/>
</dbReference>
<dbReference type="SUPFAM" id="SSF103473">
    <property type="entry name" value="MFS general substrate transporter"/>
    <property type="match status" value="1"/>
</dbReference>
<dbReference type="PROSITE" id="PS50850">
    <property type="entry name" value="MFS"/>
    <property type="match status" value="1"/>
</dbReference>
<accession>D0JUX5</accession>